<dbReference type="EMBL" id="CP001147">
    <property type="protein sequence ID" value="ACI21459.1"/>
    <property type="molecule type" value="Genomic_DNA"/>
</dbReference>
<dbReference type="RefSeq" id="WP_012546175.1">
    <property type="nucleotide sequence ID" value="NC_011296.1"/>
</dbReference>
<dbReference type="RefSeq" id="YP_002249870.1">
    <property type="nucleotide sequence ID" value="NC_011296.1"/>
</dbReference>
<dbReference type="SMR" id="B5YIZ6"/>
<dbReference type="FunCoup" id="B5YIZ6">
    <property type="interactions" value="220"/>
</dbReference>
<dbReference type="STRING" id="289376.THEYE_A2083"/>
<dbReference type="EnsemblBacteria" id="ACI21459">
    <property type="protein sequence ID" value="ACI21459"/>
    <property type="gene ID" value="THEYE_A2083"/>
</dbReference>
<dbReference type="KEGG" id="tye:THEYE_A2083"/>
<dbReference type="PATRIC" id="fig|289376.4.peg.2031"/>
<dbReference type="eggNOG" id="COG0323">
    <property type="taxonomic scope" value="Bacteria"/>
</dbReference>
<dbReference type="HOGENOM" id="CLU_004131_4_1_0"/>
<dbReference type="InParanoid" id="B5YIZ6"/>
<dbReference type="OrthoDB" id="9763467at2"/>
<dbReference type="Proteomes" id="UP000000718">
    <property type="component" value="Chromosome"/>
</dbReference>
<dbReference type="GO" id="GO:0032300">
    <property type="term" value="C:mismatch repair complex"/>
    <property type="evidence" value="ECO:0000318"/>
    <property type="project" value="GO_Central"/>
</dbReference>
<dbReference type="GO" id="GO:0005524">
    <property type="term" value="F:ATP binding"/>
    <property type="evidence" value="ECO:0007669"/>
    <property type="project" value="InterPro"/>
</dbReference>
<dbReference type="GO" id="GO:0016887">
    <property type="term" value="F:ATP hydrolysis activity"/>
    <property type="evidence" value="ECO:0000318"/>
    <property type="project" value="GO_Central"/>
</dbReference>
<dbReference type="GO" id="GO:0140664">
    <property type="term" value="F:ATP-dependent DNA damage sensor activity"/>
    <property type="evidence" value="ECO:0007669"/>
    <property type="project" value="InterPro"/>
</dbReference>
<dbReference type="GO" id="GO:0030983">
    <property type="term" value="F:mismatched DNA binding"/>
    <property type="evidence" value="ECO:0007669"/>
    <property type="project" value="InterPro"/>
</dbReference>
<dbReference type="GO" id="GO:0006298">
    <property type="term" value="P:mismatch repair"/>
    <property type="evidence" value="ECO:0000318"/>
    <property type="project" value="GO_Central"/>
</dbReference>
<dbReference type="CDD" id="cd16926">
    <property type="entry name" value="HATPase_MutL-MLH-PMS-like"/>
    <property type="match status" value="1"/>
</dbReference>
<dbReference type="CDD" id="cd00782">
    <property type="entry name" value="MutL_Trans"/>
    <property type="match status" value="1"/>
</dbReference>
<dbReference type="FunFam" id="3.30.565.10:FF:000003">
    <property type="entry name" value="DNA mismatch repair endonuclease MutL"/>
    <property type="match status" value="1"/>
</dbReference>
<dbReference type="Gene3D" id="3.30.230.10">
    <property type="match status" value="1"/>
</dbReference>
<dbReference type="Gene3D" id="3.30.565.10">
    <property type="entry name" value="Histidine kinase-like ATPase, C-terminal domain"/>
    <property type="match status" value="1"/>
</dbReference>
<dbReference type="Gene3D" id="3.30.1540.20">
    <property type="entry name" value="MutL, C-terminal domain, dimerisation subdomain"/>
    <property type="match status" value="1"/>
</dbReference>
<dbReference type="Gene3D" id="3.30.1370.100">
    <property type="entry name" value="MutL, C-terminal domain, regulatory subdomain"/>
    <property type="match status" value="1"/>
</dbReference>
<dbReference type="HAMAP" id="MF_00149">
    <property type="entry name" value="DNA_mis_repair"/>
    <property type="match status" value="1"/>
</dbReference>
<dbReference type="InterPro" id="IPR014762">
    <property type="entry name" value="DNA_mismatch_repair_CS"/>
</dbReference>
<dbReference type="InterPro" id="IPR020667">
    <property type="entry name" value="DNA_mismatch_repair_MutL"/>
</dbReference>
<dbReference type="InterPro" id="IPR013507">
    <property type="entry name" value="DNA_mismatch_S5_2-like"/>
</dbReference>
<dbReference type="InterPro" id="IPR036890">
    <property type="entry name" value="HATPase_C_sf"/>
</dbReference>
<dbReference type="InterPro" id="IPR002099">
    <property type="entry name" value="MutL/Mlh/PMS"/>
</dbReference>
<dbReference type="InterPro" id="IPR038973">
    <property type="entry name" value="MutL/Mlh/Pms-like"/>
</dbReference>
<dbReference type="InterPro" id="IPR014790">
    <property type="entry name" value="MutL_C"/>
</dbReference>
<dbReference type="InterPro" id="IPR042120">
    <property type="entry name" value="MutL_C_dimsub"/>
</dbReference>
<dbReference type="InterPro" id="IPR042121">
    <property type="entry name" value="MutL_C_regsub"/>
</dbReference>
<dbReference type="InterPro" id="IPR037198">
    <property type="entry name" value="MutL_C_sf"/>
</dbReference>
<dbReference type="InterPro" id="IPR020568">
    <property type="entry name" value="Ribosomal_Su5_D2-typ_SF"/>
</dbReference>
<dbReference type="InterPro" id="IPR014721">
    <property type="entry name" value="Ribsml_uS5_D2-typ_fold_subgr"/>
</dbReference>
<dbReference type="NCBIfam" id="TIGR00585">
    <property type="entry name" value="mutl"/>
    <property type="match status" value="1"/>
</dbReference>
<dbReference type="PANTHER" id="PTHR10073">
    <property type="entry name" value="DNA MISMATCH REPAIR PROTEIN MLH, PMS, MUTL"/>
    <property type="match status" value="1"/>
</dbReference>
<dbReference type="PANTHER" id="PTHR10073:SF12">
    <property type="entry name" value="DNA MISMATCH REPAIR PROTEIN MLH1"/>
    <property type="match status" value="1"/>
</dbReference>
<dbReference type="Pfam" id="PF01119">
    <property type="entry name" value="DNA_mis_repair"/>
    <property type="match status" value="1"/>
</dbReference>
<dbReference type="Pfam" id="PF13589">
    <property type="entry name" value="HATPase_c_3"/>
    <property type="match status" value="1"/>
</dbReference>
<dbReference type="Pfam" id="PF08676">
    <property type="entry name" value="MutL_C"/>
    <property type="match status" value="1"/>
</dbReference>
<dbReference type="SMART" id="SM01340">
    <property type="entry name" value="DNA_mis_repair"/>
    <property type="match status" value="1"/>
</dbReference>
<dbReference type="SMART" id="SM00853">
    <property type="entry name" value="MutL_C"/>
    <property type="match status" value="1"/>
</dbReference>
<dbReference type="SUPFAM" id="SSF55874">
    <property type="entry name" value="ATPase domain of HSP90 chaperone/DNA topoisomerase II/histidine kinase"/>
    <property type="match status" value="1"/>
</dbReference>
<dbReference type="SUPFAM" id="SSF118116">
    <property type="entry name" value="DNA mismatch repair protein MutL"/>
    <property type="match status" value="1"/>
</dbReference>
<dbReference type="SUPFAM" id="SSF54211">
    <property type="entry name" value="Ribosomal protein S5 domain 2-like"/>
    <property type="match status" value="1"/>
</dbReference>
<dbReference type="PROSITE" id="PS00058">
    <property type="entry name" value="DNA_MISMATCH_REPAIR_1"/>
    <property type="match status" value="1"/>
</dbReference>
<organism>
    <name type="scientific">Thermodesulfovibrio yellowstonii (strain ATCC 51303 / DSM 11347 / YP87)</name>
    <dbReference type="NCBI Taxonomy" id="289376"/>
    <lineage>
        <taxon>Bacteria</taxon>
        <taxon>Pseudomonadati</taxon>
        <taxon>Nitrospirota</taxon>
        <taxon>Thermodesulfovibrionia</taxon>
        <taxon>Thermodesulfovibrionales</taxon>
        <taxon>Thermodesulfovibrionaceae</taxon>
        <taxon>Thermodesulfovibrio</taxon>
    </lineage>
</organism>
<comment type="function">
    <text evidence="1">This protein is involved in the repair of mismatches in DNA. It is required for dam-dependent methyl-directed DNA mismatch repair. May act as a 'molecular matchmaker', a protein that promotes the formation of a stable complex between two or more DNA-binding proteins in an ATP-dependent manner without itself being part of a final effector complex.</text>
</comment>
<comment type="similarity">
    <text evidence="1">Belongs to the DNA mismatch repair MutL/HexB family.</text>
</comment>
<keyword id="KW-0227">DNA damage</keyword>
<keyword id="KW-0234">DNA repair</keyword>
<keyword id="KW-1185">Reference proteome</keyword>
<protein>
    <recommendedName>
        <fullName evidence="1">DNA mismatch repair protein MutL</fullName>
    </recommendedName>
</protein>
<reference key="1">
    <citation type="submission" date="2008-08" db="EMBL/GenBank/DDBJ databases">
        <title>The complete genome sequence of Thermodesulfovibrio yellowstonii strain ATCC 51303 / DSM 11347 / YP87.</title>
        <authorList>
            <person name="Dodson R.J."/>
            <person name="Durkin A.S."/>
            <person name="Wu M."/>
            <person name="Eisen J."/>
            <person name="Sutton G."/>
        </authorList>
    </citation>
    <scope>NUCLEOTIDE SEQUENCE [LARGE SCALE GENOMIC DNA]</scope>
    <source>
        <strain>ATCC 51303 / DSM 11347 / YP87</strain>
    </source>
</reference>
<feature type="chain" id="PRO_1000096697" description="DNA mismatch repair protein MutL">
    <location>
        <begin position="1"/>
        <end position="544"/>
    </location>
</feature>
<evidence type="ECO:0000255" key="1">
    <source>
        <dbReference type="HAMAP-Rule" id="MF_00149"/>
    </source>
</evidence>
<accession>B5YIZ6</accession>
<proteinExistence type="inferred from homology"/>
<sequence>MNRIKILPETIVGKISAGEVVERPASVVKELIENSIDAGANSISVYIKEFGIAEIKVIDDGEGIPSDDVILAFQRHATSKIKDEKDLQRISSLGFRGEALYSIANVSKLKIITQYKDEDTGTEVYLTGGNLVSQKPVVTKGTTVEIRDLFFNTPVRRKFLKSSYTEKAHIIETVQNYCLAYPEISFSLFIDREEVLNIPQVKTLYDRISQVFGLEFTEKLKFKTISKDNYKIELFLGGEELLRKSKGRQLIFVNRRPVKDFSIVNTIYKAFHINENHPQFFIFINLPPEDVDFNVHPAKKEVRFREPQIIHQLIFRMSEYQVKSSMIAEETNQWKVNADLSSISQISAFYTESIFNKEEIFHFFSIGDAIVVIQRVDGIVFLDFHAAHERVNFEKILNKMSEQIVKLTFPHVINLNPQDYVLIKENLHILNELGIEAEDFGENSIVIRALPEIIKYIDIAGMIENIALTLKEGTSTPDFIEIKRKIAATIACHSSLRANEKINHFEIKALLQELERTSDPEHCPHGRPVRKFISLDEIKKWFLR</sequence>
<name>MUTL_THEYD</name>
<gene>
    <name evidence="1" type="primary">mutL</name>
    <name type="ordered locus">THEYE_A2083</name>
</gene>